<feature type="chain" id="PRO_0000176453" description="Asparagine--tRNA ligase">
    <location>
        <begin position="1"/>
        <end position="430"/>
    </location>
</feature>
<sequence length="430" mass="49448">MKTTIKQAKKHLNQEVTIGAWLTNKRSSGKIAFLQLRDGTGFMQGVVVKSEVDEETFQLAKDITQESSLYITGTITEDNRSDLGYEMQVKSIEIVHEAHDYPITPKNHGTEFLMDHRHLWLRSKKQHAVMKIRNEIIRATYEFFNENGFTKIDPPILTASAPEGTSELFHTKYFDEDAFLSQSGQLYMEAAAMAHGRVFSFGPTFRAEKSKTRRHLIEFWMIEPEMAFTNHAESLEIQEQYVSHIVQSVLNHCQLELKALDRDTTKLEKVATPFPRISYDDAIEFLKKEGFDDIEWGEDFGAPHETAIANHYDLPVFITNYPTKIKPFYMQPNPDNEDTVLCADLIAPEGYGEIIGGSERINDLELLEQRINEHELDEESYSYYLDLRRYGSVPHSGFGLGLERTVAWISGVEHVRETSPFPRLLNRLYP</sequence>
<evidence type="ECO:0000255" key="1">
    <source>
        <dbReference type="HAMAP-Rule" id="MF_00534"/>
    </source>
</evidence>
<accession>Q8CSI9</accession>
<name>SYN_STAES</name>
<comment type="catalytic activity">
    <reaction evidence="1">
        <text>tRNA(Asn) + L-asparagine + ATP = L-asparaginyl-tRNA(Asn) + AMP + diphosphate + H(+)</text>
        <dbReference type="Rhea" id="RHEA:11180"/>
        <dbReference type="Rhea" id="RHEA-COMP:9659"/>
        <dbReference type="Rhea" id="RHEA-COMP:9674"/>
        <dbReference type="ChEBI" id="CHEBI:15378"/>
        <dbReference type="ChEBI" id="CHEBI:30616"/>
        <dbReference type="ChEBI" id="CHEBI:33019"/>
        <dbReference type="ChEBI" id="CHEBI:58048"/>
        <dbReference type="ChEBI" id="CHEBI:78442"/>
        <dbReference type="ChEBI" id="CHEBI:78515"/>
        <dbReference type="ChEBI" id="CHEBI:456215"/>
        <dbReference type="EC" id="6.1.1.22"/>
    </reaction>
</comment>
<comment type="subunit">
    <text evidence="1">Homodimer.</text>
</comment>
<comment type="subcellular location">
    <subcellularLocation>
        <location evidence="1">Cytoplasm</location>
    </subcellularLocation>
</comment>
<comment type="similarity">
    <text evidence="1">Belongs to the class-II aminoacyl-tRNA synthetase family.</text>
</comment>
<keyword id="KW-0030">Aminoacyl-tRNA synthetase</keyword>
<keyword id="KW-0067">ATP-binding</keyword>
<keyword id="KW-0963">Cytoplasm</keyword>
<keyword id="KW-0436">Ligase</keyword>
<keyword id="KW-0547">Nucleotide-binding</keyword>
<keyword id="KW-0648">Protein biosynthesis</keyword>
<protein>
    <recommendedName>
        <fullName evidence="1">Asparagine--tRNA ligase</fullName>
        <ecNumber evidence="1">6.1.1.22</ecNumber>
    </recommendedName>
    <alternativeName>
        <fullName evidence="1">Asparaginyl-tRNA synthetase</fullName>
        <shortName evidence="1">AsnRS</shortName>
    </alternativeName>
</protein>
<gene>
    <name evidence="1" type="primary">asnS</name>
    <name type="ordered locus">SE_1142</name>
</gene>
<proteinExistence type="inferred from homology"/>
<organism>
    <name type="scientific">Staphylococcus epidermidis (strain ATCC 12228 / FDA PCI 1200)</name>
    <dbReference type="NCBI Taxonomy" id="176280"/>
    <lineage>
        <taxon>Bacteria</taxon>
        <taxon>Bacillati</taxon>
        <taxon>Bacillota</taxon>
        <taxon>Bacilli</taxon>
        <taxon>Bacillales</taxon>
        <taxon>Staphylococcaceae</taxon>
        <taxon>Staphylococcus</taxon>
    </lineage>
</organism>
<dbReference type="EC" id="6.1.1.22" evidence="1"/>
<dbReference type="EMBL" id="AE015929">
    <property type="protein sequence ID" value="AAO04739.1"/>
    <property type="molecule type" value="Genomic_DNA"/>
</dbReference>
<dbReference type="RefSeq" id="NP_764697.1">
    <property type="nucleotide sequence ID" value="NC_004461.1"/>
</dbReference>
<dbReference type="RefSeq" id="WP_002439780.1">
    <property type="nucleotide sequence ID" value="NZ_WBME01000006.1"/>
</dbReference>
<dbReference type="SMR" id="Q8CSI9"/>
<dbReference type="GeneID" id="50018735"/>
<dbReference type="KEGG" id="sep:SE_1142"/>
<dbReference type="PATRIC" id="fig|176280.10.peg.1115"/>
<dbReference type="eggNOG" id="COG0017">
    <property type="taxonomic scope" value="Bacteria"/>
</dbReference>
<dbReference type="HOGENOM" id="CLU_004553_2_0_9"/>
<dbReference type="OrthoDB" id="9762036at2"/>
<dbReference type="Proteomes" id="UP000001411">
    <property type="component" value="Chromosome"/>
</dbReference>
<dbReference type="GO" id="GO:0005737">
    <property type="term" value="C:cytoplasm"/>
    <property type="evidence" value="ECO:0007669"/>
    <property type="project" value="UniProtKB-SubCell"/>
</dbReference>
<dbReference type="GO" id="GO:0004816">
    <property type="term" value="F:asparagine-tRNA ligase activity"/>
    <property type="evidence" value="ECO:0007669"/>
    <property type="project" value="UniProtKB-UniRule"/>
</dbReference>
<dbReference type="GO" id="GO:0005524">
    <property type="term" value="F:ATP binding"/>
    <property type="evidence" value="ECO:0007669"/>
    <property type="project" value="UniProtKB-UniRule"/>
</dbReference>
<dbReference type="GO" id="GO:0140096">
    <property type="term" value="F:catalytic activity, acting on a protein"/>
    <property type="evidence" value="ECO:0007669"/>
    <property type="project" value="UniProtKB-ARBA"/>
</dbReference>
<dbReference type="GO" id="GO:0003676">
    <property type="term" value="F:nucleic acid binding"/>
    <property type="evidence" value="ECO:0007669"/>
    <property type="project" value="InterPro"/>
</dbReference>
<dbReference type="GO" id="GO:0016740">
    <property type="term" value="F:transferase activity"/>
    <property type="evidence" value="ECO:0007669"/>
    <property type="project" value="UniProtKB-ARBA"/>
</dbReference>
<dbReference type="GO" id="GO:0006421">
    <property type="term" value="P:asparaginyl-tRNA aminoacylation"/>
    <property type="evidence" value="ECO:0007669"/>
    <property type="project" value="UniProtKB-UniRule"/>
</dbReference>
<dbReference type="CDD" id="cd04323">
    <property type="entry name" value="AsnRS_cyto_like_N"/>
    <property type="match status" value="1"/>
</dbReference>
<dbReference type="CDD" id="cd00776">
    <property type="entry name" value="AsxRS_core"/>
    <property type="match status" value="1"/>
</dbReference>
<dbReference type="Gene3D" id="3.30.930.10">
    <property type="entry name" value="Bira Bifunctional Protein, Domain 2"/>
    <property type="match status" value="1"/>
</dbReference>
<dbReference type="Gene3D" id="2.40.50.140">
    <property type="entry name" value="Nucleic acid-binding proteins"/>
    <property type="match status" value="1"/>
</dbReference>
<dbReference type="HAMAP" id="MF_00534">
    <property type="entry name" value="Asn_tRNA_synth"/>
    <property type="match status" value="1"/>
</dbReference>
<dbReference type="InterPro" id="IPR004364">
    <property type="entry name" value="Aa-tRNA-synt_II"/>
</dbReference>
<dbReference type="InterPro" id="IPR006195">
    <property type="entry name" value="aa-tRNA-synth_II"/>
</dbReference>
<dbReference type="InterPro" id="IPR045864">
    <property type="entry name" value="aa-tRNA-synth_II/BPL/LPL"/>
</dbReference>
<dbReference type="InterPro" id="IPR004522">
    <property type="entry name" value="Asn-tRNA-ligase"/>
</dbReference>
<dbReference type="InterPro" id="IPR002312">
    <property type="entry name" value="Asp/Asn-tRNA-synth_IIb"/>
</dbReference>
<dbReference type="InterPro" id="IPR012340">
    <property type="entry name" value="NA-bd_OB-fold"/>
</dbReference>
<dbReference type="InterPro" id="IPR004365">
    <property type="entry name" value="NA-bd_OB_tRNA"/>
</dbReference>
<dbReference type="NCBIfam" id="TIGR00457">
    <property type="entry name" value="asnS"/>
    <property type="match status" value="1"/>
</dbReference>
<dbReference type="NCBIfam" id="NF003037">
    <property type="entry name" value="PRK03932.1"/>
    <property type="match status" value="1"/>
</dbReference>
<dbReference type="NCBIfam" id="NF003483">
    <property type="entry name" value="PRK05159.1"/>
    <property type="match status" value="1"/>
</dbReference>
<dbReference type="PANTHER" id="PTHR22594:SF34">
    <property type="entry name" value="ASPARAGINE--TRNA LIGASE, MITOCHONDRIAL-RELATED"/>
    <property type="match status" value="1"/>
</dbReference>
<dbReference type="PANTHER" id="PTHR22594">
    <property type="entry name" value="ASPARTYL/LYSYL-TRNA SYNTHETASE"/>
    <property type="match status" value="1"/>
</dbReference>
<dbReference type="Pfam" id="PF00152">
    <property type="entry name" value="tRNA-synt_2"/>
    <property type="match status" value="1"/>
</dbReference>
<dbReference type="Pfam" id="PF01336">
    <property type="entry name" value="tRNA_anti-codon"/>
    <property type="match status" value="1"/>
</dbReference>
<dbReference type="PRINTS" id="PR01042">
    <property type="entry name" value="TRNASYNTHASP"/>
</dbReference>
<dbReference type="SUPFAM" id="SSF55681">
    <property type="entry name" value="Class II aaRS and biotin synthetases"/>
    <property type="match status" value="1"/>
</dbReference>
<dbReference type="SUPFAM" id="SSF50249">
    <property type="entry name" value="Nucleic acid-binding proteins"/>
    <property type="match status" value="1"/>
</dbReference>
<dbReference type="PROSITE" id="PS50862">
    <property type="entry name" value="AA_TRNA_LIGASE_II"/>
    <property type="match status" value="1"/>
</dbReference>
<reference key="1">
    <citation type="journal article" date="2003" name="Mol. Microbiol.">
        <title>Genome-based analysis of virulence genes in a non-biofilm-forming Staphylococcus epidermidis strain (ATCC 12228).</title>
        <authorList>
            <person name="Zhang Y.-Q."/>
            <person name="Ren S.-X."/>
            <person name="Li H.-L."/>
            <person name="Wang Y.-X."/>
            <person name="Fu G."/>
            <person name="Yang J."/>
            <person name="Qin Z.-Q."/>
            <person name="Miao Y.-G."/>
            <person name="Wang W.-Y."/>
            <person name="Chen R.-S."/>
            <person name="Shen Y."/>
            <person name="Chen Z."/>
            <person name="Yuan Z.-H."/>
            <person name="Zhao G.-P."/>
            <person name="Qu D."/>
            <person name="Danchin A."/>
            <person name="Wen Y.-M."/>
        </authorList>
    </citation>
    <scope>NUCLEOTIDE SEQUENCE [LARGE SCALE GENOMIC DNA]</scope>
    <source>
        <strain>ATCC 12228 / FDA PCI 1200</strain>
    </source>
</reference>